<keyword id="KW-0002">3D-structure</keyword>
<keyword id="KW-0998">Cell outer membrane</keyword>
<keyword id="KW-0186">Copper</keyword>
<keyword id="KW-0472">Membrane</keyword>
<keyword id="KW-0614">Plasmid</keyword>
<keyword id="KW-0732">Signal</keyword>
<gene>
    <name type="primary">pcoB</name>
</gene>
<comment type="function">
    <text>Required for the copper-inducible expression of copper resistance.</text>
</comment>
<comment type="subcellular location">
    <subcellularLocation>
        <location evidence="2">Cell outer membrane</location>
        <topology evidence="2">Peripheral membrane protein</topology>
    </subcellularLocation>
</comment>
<name>PCOB_ECOLX</name>
<protein>
    <recommendedName>
        <fullName>Copper resistance protein B</fullName>
    </recommendedName>
</protein>
<dbReference type="EMBL" id="X83541">
    <property type="protein sequence ID" value="CAA58526.1"/>
    <property type="molecule type" value="Genomic_DNA"/>
</dbReference>
<dbReference type="PIR" id="S70160">
    <property type="entry name" value="S52254"/>
</dbReference>
<dbReference type="RefSeq" id="WP_001378118.1">
    <property type="nucleotide sequence ID" value="NZ_WVVT01000006.1"/>
</dbReference>
<dbReference type="PDB" id="7PGE">
    <property type="method" value="X-ray"/>
    <property type="resolution" value="2.00 A"/>
    <property type="chains" value="B=82-296"/>
</dbReference>
<dbReference type="PDBsum" id="7PGE"/>
<dbReference type="SMR" id="Q47453"/>
<dbReference type="TCDB" id="1.B.76.1.5">
    <property type="family name" value="the copper resistance putative porin (copb) family"/>
</dbReference>
<dbReference type="GeneID" id="93248121"/>
<dbReference type="eggNOG" id="COG3667">
    <property type="taxonomic scope" value="Bacteria"/>
</dbReference>
<dbReference type="GO" id="GO:0009279">
    <property type="term" value="C:cell outer membrane"/>
    <property type="evidence" value="ECO:0007669"/>
    <property type="project" value="UniProtKB-SubCell"/>
</dbReference>
<dbReference type="GO" id="GO:0005507">
    <property type="term" value="F:copper ion binding"/>
    <property type="evidence" value="ECO:0007669"/>
    <property type="project" value="InterPro"/>
</dbReference>
<dbReference type="GO" id="GO:0006878">
    <property type="term" value="P:intracellular copper ion homeostasis"/>
    <property type="evidence" value="ECO:0007669"/>
    <property type="project" value="InterPro"/>
</dbReference>
<dbReference type="InterPro" id="IPR007939">
    <property type="entry name" value="Cu-R_B_prcur"/>
</dbReference>
<dbReference type="Pfam" id="PF05275">
    <property type="entry name" value="CopB"/>
    <property type="match status" value="1"/>
</dbReference>
<feature type="signal peptide" evidence="1">
    <location>
        <begin position="1"/>
        <end position="23"/>
    </location>
</feature>
<feature type="chain" id="PRO_0000022019" description="Copper resistance protein B">
    <location>
        <begin position="24"/>
        <end position="296"/>
    </location>
</feature>
<feature type="strand" evidence="3">
    <location>
        <begin position="91"/>
        <end position="103"/>
    </location>
</feature>
<feature type="strand" evidence="3">
    <location>
        <begin position="108"/>
        <end position="119"/>
    </location>
</feature>
<feature type="strand" evidence="3">
    <location>
        <begin position="121"/>
        <end position="134"/>
    </location>
</feature>
<feature type="strand" evidence="3">
    <location>
        <begin position="137"/>
        <end position="166"/>
    </location>
</feature>
<feature type="strand" evidence="3">
    <location>
        <begin position="169"/>
        <end position="182"/>
    </location>
</feature>
<feature type="turn" evidence="3">
    <location>
        <begin position="183"/>
        <end position="185"/>
    </location>
</feature>
<feature type="strand" evidence="3">
    <location>
        <begin position="186"/>
        <end position="195"/>
    </location>
</feature>
<feature type="strand" evidence="3">
    <location>
        <begin position="200"/>
        <end position="208"/>
    </location>
</feature>
<feature type="strand" evidence="3">
    <location>
        <begin position="210"/>
        <end position="228"/>
    </location>
</feature>
<feature type="strand" evidence="3">
    <location>
        <begin position="240"/>
        <end position="251"/>
    </location>
</feature>
<feature type="strand" evidence="3">
    <location>
        <begin position="257"/>
        <end position="268"/>
    </location>
</feature>
<feature type="helix" evidence="3">
    <location>
        <begin position="270"/>
        <end position="278"/>
    </location>
</feature>
<feature type="strand" evidence="3">
    <location>
        <begin position="283"/>
        <end position="296"/>
    </location>
</feature>
<proteinExistence type="evidence at protein level"/>
<sequence length="296" mass="32945">MKRNLKAIPVLVAGLFTSQLSIAAGSVSADPHAGHDMSAMQMPADENFTEMTSMEPIVTESRTPIPPVTDADRKAAFGNLQGHAIHDSAINYLVLLDQLEWQRSDNTNNFSWSVNSWIGGDTDRIWLKSEGERSNGETEAAEAQLLWGHAVGPWWDLVAGVRQDFRPASARTWAAVGFQGLALYNFESEITGFVSNGGKAALRLGGEYDVLLTNRLILQPSYEVNFYSQDDESRGRGRGLTDTELGLRLRYEIRREFAPYIGVSWNQLYGKTSDMAKREGEKDHQVVFLAGARIWF</sequence>
<geneLocation type="plasmid">
    <name>pRJ1004</name>
</geneLocation>
<accession>Q47453</accession>
<organism>
    <name type="scientific">Escherichia coli</name>
    <dbReference type="NCBI Taxonomy" id="562"/>
    <lineage>
        <taxon>Bacteria</taxon>
        <taxon>Pseudomonadati</taxon>
        <taxon>Pseudomonadota</taxon>
        <taxon>Gammaproteobacteria</taxon>
        <taxon>Enterobacterales</taxon>
        <taxon>Enterobacteriaceae</taxon>
        <taxon>Escherichia</taxon>
    </lineage>
</organism>
<evidence type="ECO:0000255" key="1"/>
<evidence type="ECO:0000305" key="2"/>
<evidence type="ECO:0007829" key="3">
    <source>
        <dbReference type="PDB" id="7PGE"/>
    </source>
</evidence>
<reference key="1">
    <citation type="journal article" date="1995" name="Mol. Microbiol.">
        <title>Molecular genetics and transport analysis of the copper-resistance determinant (pco) from Escherichia coli plasmid pRJ1004.</title>
        <authorList>
            <person name="Brown N.L."/>
            <person name="Barrett S.R."/>
            <person name="Camakaris J."/>
            <person name="Lee B.T.O."/>
            <person name="Rouch D.A."/>
        </authorList>
    </citation>
    <scope>NUCLEOTIDE SEQUENCE [GENOMIC DNA]</scope>
</reference>